<organism>
    <name type="scientific">Salmonella typhi</name>
    <dbReference type="NCBI Taxonomy" id="90370"/>
    <lineage>
        <taxon>Bacteria</taxon>
        <taxon>Pseudomonadati</taxon>
        <taxon>Pseudomonadota</taxon>
        <taxon>Gammaproteobacteria</taxon>
        <taxon>Enterobacterales</taxon>
        <taxon>Enterobacteriaceae</taxon>
        <taxon>Salmonella</taxon>
    </lineage>
</organism>
<reference key="1">
    <citation type="journal article" date="1999" name="FEMS Microbiol. Lett.">
        <title>Genetic rearrangements in the tyrB-uvrA region of the enterobacterial chromosome: a potential cause for different class B acid phosphatase regulation in Salmonella enterica and Escherichia coli.</title>
        <authorList>
            <person name="Rossolini G.M."/>
            <person name="Bonci A."/>
            <person name="Schippa S."/>
            <person name="Berlutti F."/>
            <person name="Thaller M.C."/>
        </authorList>
    </citation>
    <scope>NUCLEOTIDE SEQUENCE [GENOMIC DNA]</scope>
    <source>
        <strain>STY4</strain>
    </source>
</reference>
<reference key="2">
    <citation type="journal article" date="2001" name="Nature">
        <title>Complete genome sequence of a multiple drug resistant Salmonella enterica serovar Typhi CT18.</title>
        <authorList>
            <person name="Parkhill J."/>
            <person name="Dougan G."/>
            <person name="James K.D."/>
            <person name="Thomson N.R."/>
            <person name="Pickard D."/>
            <person name="Wain J."/>
            <person name="Churcher C.M."/>
            <person name="Mungall K.L."/>
            <person name="Bentley S.D."/>
            <person name="Holden M.T.G."/>
            <person name="Sebaihia M."/>
            <person name="Baker S."/>
            <person name="Basham D."/>
            <person name="Brooks K."/>
            <person name="Chillingworth T."/>
            <person name="Connerton P."/>
            <person name="Cronin A."/>
            <person name="Davis P."/>
            <person name="Davies R.M."/>
            <person name="Dowd L."/>
            <person name="White N."/>
            <person name="Farrar J."/>
            <person name="Feltwell T."/>
            <person name="Hamlin N."/>
            <person name="Haque A."/>
            <person name="Hien T.T."/>
            <person name="Holroyd S."/>
            <person name="Jagels K."/>
            <person name="Krogh A."/>
            <person name="Larsen T.S."/>
            <person name="Leather S."/>
            <person name="Moule S."/>
            <person name="O'Gaora P."/>
            <person name="Parry C."/>
            <person name="Quail M.A."/>
            <person name="Rutherford K.M."/>
            <person name="Simmonds M."/>
            <person name="Skelton J."/>
            <person name="Stevens K."/>
            <person name="Whitehead S."/>
            <person name="Barrell B.G."/>
        </authorList>
    </citation>
    <scope>NUCLEOTIDE SEQUENCE [LARGE SCALE GENOMIC DNA]</scope>
    <source>
        <strain>CT18</strain>
    </source>
</reference>
<reference key="3">
    <citation type="journal article" date="2003" name="J. Bacteriol.">
        <title>Comparative genomics of Salmonella enterica serovar Typhi strains Ty2 and CT18.</title>
        <authorList>
            <person name="Deng W."/>
            <person name="Liou S.-R."/>
            <person name="Plunkett G. III"/>
            <person name="Mayhew G.F."/>
            <person name="Rose D.J."/>
            <person name="Burland V."/>
            <person name="Kodoyianni V."/>
            <person name="Schwartz D.C."/>
            <person name="Blattner F.R."/>
        </authorList>
    </citation>
    <scope>NUCLEOTIDE SEQUENCE [LARGE SCALE GENOMIC DNA]</scope>
    <source>
        <strain>ATCC 700931 / Ty2</strain>
    </source>
</reference>
<reference key="4">
    <citation type="journal article" date="2015" name="Proc. Natl. Acad. Sci. U.S.A.">
        <title>Panoramic view of a superfamily of phosphatases through substrate profiling.</title>
        <authorList>
            <person name="Huang H."/>
            <person name="Pandya C."/>
            <person name="Liu C."/>
            <person name="Al-Obaidi N.F."/>
            <person name="Wang M."/>
            <person name="Zheng L."/>
            <person name="Toews Keating S."/>
            <person name="Aono M."/>
            <person name="Love J.D."/>
            <person name="Evans B."/>
            <person name="Seidel R.D."/>
            <person name="Hillerich B.S."/>
            <person name="Garforth S.J."/>
            <person name="Almo S.C."/>
            <person name="Mariano P.S."/>
            <person name="Dunaway-Mariano D."/>
            <person name="Allen K.N."/>
            <person name="Farelli J.D."/>
        </authorList>
    </citation>
    <scope>FUNCTION</scope>
    <scope>CATALYTIC ACTIVITY</scope>
    <scope>COFACTOR</scope>
</reference>
<name>APHA_SALTI</name>
<feature type="signal peptide" evidence="4">
    <location>
        <begin position="1"/>
        <end position="23"/>
    </location>
</feature>
<feature type="chain" id="PRO_0000024008" description="Class B acid phosphatase">
    <location>
        <begin position="24"/>
        <end position="237"/>
    </location>
</feature>
<feature type="active site" description="Nucleophile" evidence="3">
    <location>
        <position position="69"/>
    </location>
</feature>
<feature type="active site" description="Proton donor" evidence="3">
    <location>
        <position position="71"/>
    </location>
</feature>
<feature type="binding site" evidence="3">
    <location>
        <position position="69"/>
    </location>
    <ligand>
        <name>Mg(2+)</name>
        <dbReference type="ChEBI" id="CHEBI:18420"/>
    </ligand>
</feature>
<feature type="binding site" evidence="3">
    <location>
        <position position="71"/>
    </location>
    <ligand>
        <name>Mg(2+)</name>
        <dbReference type="ChEBI" id="CHEBI:18420"/>
    </ligand>
</feature>
<feature type="binding site" evidence="3">
    <location>
        <begin position="137"/>
        <end position="138"/>
    </location>
    <ligand>
        <name>substrate</name>
    </ligand>
</feature>
<feature type="binding site" evidence="3">
    <location>
        <position position="177"/>
    </location>
    <ligand>
        <name>substrate</name>
    </ligand>
</feature>
<feature type="binding site" evidence="3">
    <location>
        <position position="192"/>
    </location>
    <ligand>
        <name>Mg(2+)</name>
        <dbReference type="ChEBI" id="CHEBI:18420"/>
    </ligand>
</feature>
<feature type="sequence conflict" description="In Ref. 1; CAB40974." evidence="6" ref="1">
    <location>
        <position position="7"/>
    </location>
</feature>
<evidence type="ECO:0000250" key="1"/>
<evidence type="ECO:0000250" key="2">
    <source>
        <dbReference type="UniProtKB" id="P58683"/>
    </source>
</evidence>
<evidence type="ECO:0000250" key="3">
    <source>
        <dbReference type="UniProtKB" id="Q540U1"/>
    </source>
</evidence>
<evidence type="ECO:0000255" key="4"/>
<evidence type="ECO:0000269" key="5">
    <source>
    </source>
</evidence>
<evidence type="ECO:0000305" key="6"/>
<dbReference type="EC" id="3.1.3.2" evidence="5"/>
<dbReference type="EMBL" id="AJ237788">
    <property type="protein sequence ID" value="CAB40974.1"/>
    <property type="molecule type" value="Genomic_DNA"/>
</dbReference>
<dbReference type="EMBL" id="AL513382">
    <property type="protein sequence ID" value="CAD09233.1"/>
    <property type="molecule type" value="Genomic_DNA"/>
</dbReference>
<dbReference type="EMBL" id="AE014613">
    <property type="protein sequence ID" value="AAO71619.1"/>
    <property type="molecule type" value="Genomic_DNA"/>
</dbReference>
<dbReference type="RefSeq" id="NP_458547.1">
    <property type="nucleotide sequence ID" value="NC_003198.1"/>
</dbReference>
<dbReference type="RefSeq" id="WP_000724436.1">
    <property type="nucleotide sequence ID" value="NZ_WSUR01000027.1"/>
</dbReference>
<dbReference type="SMR" id="O08430"/>
<dbReference type="STRING" id="220341.gene:17588277"/>
<dbReference type="KEGG" id="stt:t4155"/>
<dbReference type="KEGG" id="sty:STY4445"/>
<dbReference type="PATRIC" id="fig|220341.7.peg.4546"/>
<dbReference type="eggNOG" id="COG3700">
    <property type="taxonomic scope" value="Bacteria"/>
</dbReference>
<dbReference type="HOGENOM" id="CLU_081496_0_0_6"/>
<dbReference type="OMA" id="PEFWEKM"/>
<dbReference type="OrthoDB" id="2234478at2"/>
<dbReference type="Proteomes" id="UP000000541">
    <property type="component" value="Chromosome"/>
</dbReference>
<dbReference type="Proteomes" id="UP000002670">
    <property type="component" value="Chromosome"/>
</dbReference>
<dbReference type="GO" id="GO:0030288">
    <property type="term" value="C:outer membrane-bounded periplasmic space"/>
    <property type="evidence" value="ECO:0007669"/>
    <property type="project" value="InterPro"/>
</dbReference>
<dbReference type="GO" id="GO:0003993">
    <property type="term" value="F:acid phosphatase activity"/>
    <property type="evidence" value="ECO:0007669"/>
    <property type="project" value="UniProtKB-EC"/>
</dbReference>
<dbReference type="GO" id="GO:0046872">
    <property type="term" value="F:metal ion binding"/>
    <property type="evidence" value="ECO:0007669"/>
    <property type="project" value="UniProtKB-KW"/>
</dbReference>
<dbReference type="CDD" id="cd07499">
    <property type="entry name" value="HAD_CBAP"/>
    <property type="match status" value="1"/>
</dbReference>
<dbReference type="FunFam" id="3.40.50.1000:FF:000049">
    <property type="entry name" value="Class B acid phosphatase"/>
    <property type="match status" value="1"/>
</dbReference>
<dbReference type="Gene3D" id="3.40.50.1000">
    <property type="entry name" value="HAD superfamily/HAD-like"/>
    <property type="match status" value="1"/>
</dbReference>
<dbReference type="InterPro" id="IPR005519">
    <property type="entry name" value="Acid_phosphat_B-like"/>
</dbReference>
<dbReference type="InterPro" id="IPR036412">
    <property type="entry name" value="HAD-like_sf"/>
</dbReference>
<dbReference type="InterPro" id="IPR010025">
    <property type="entry name" value="HAD-SF_ppase_IIIB_AphA"/>
</dbReference>
<dbReference type="InterPro" id="IPR023214">
    <property type="entry name" value="HAD_sf"/>
</dbReference>
<dbReference type="NCBIfam" id="TIGR01672">
    <property type="entry name" value="AphA"/>
    <property type="match status" value="1"/>
</dbReference>
<dbReference type="Pfam" id="PF03767">
    <property type="entry name" value="Acid_phosphat_B"/>
    <property type="match status" value="1"/>
</dbReference>
<dbReference type="PIRSF" id="PIRSF017818">
    <property type="entry name" value="Acid_Ptase_B"/>
    <property type="match status" value="1"/>
</dbReference>
<dbReference type="SFLD" id="SFLDG01127">
    <property type="entry name" value="C1.3:_Acid_Phosphatase_Like"/>
    <property type="match status" value="1"/>
</dbReference>
<dbReference type="SFLD" id="SFLDS00003">
    <property type="entry name" value="Haloacid_Dehalogenase"/>
    <property type="match status" value="1"/>
</dbReference>
<dbReference type="SUPFAM" id="SSF56784">
    <property type="entry name" value="HAD-like"/>
    <property type="match status" value="1"/>
</dbReference>
<proteinExistence type="evidence at protein level"/>
<comment type="function">
    <text evidence="2 5">Dephosphorylates several organic phosphate monoesters including monophosphate nucleotides (NMPs), coenzyme A (CoA), nicotinamide adenine dinucleotide phosphate (NADP), flavin mononucleotide (FMN) and phosphorylated 5-6 carbon sugars in vitro (PubMed:25848029). Also has a phosphotransferase activity catalyzing the transfer of low-energy phosphate groups from organic phosphate monoesters to free hydroxyl groups of various organic compounds (By similarity).</text>
</comment>
<comment type="catalytic activity">
    <reaction evidence="5">
        <text>a phosphate monoester + H2O = an alcohol + phosphate</text>
        <dbReference type="Rhea" id="RHEA:15017"/>
        <dbReference type="ChEBI" id="CHEBI:15377"/>
        <dbReference type="ChEBI" id="CHEBI:30879"/>
        <dbReference type="ChEBI" id="CHEBI:43474"/>
        <dbReference type="ChEBI" id="CHEBI:67140"/>
        <dbReference type="EC" id="3.1.3.2"/>
    </reaction>
</comment>
<comment type="cofactor">
    <cofactor evidence="5">
        <name>Mg(2+)</name>
        <dbReference type="ChEBI" id="CHEBI:18420"/>
    </cofactor>
    <text evidence="3">Binds 1 Mg(2+) ion per subunit.</text>
</comment>
<comment type="subunit">
    <text evidence="1">Homotetramer.</text>
</comment>
<comment type="subcellular location">
    <subcellularLocation>
        <location evidence="1">Periplasm</location>
    </subcellularLocation>
</comment>
<comment type="similarity">
    <text evidence="6">Belongs to the class B bacterial acid phosphatase family.</text>
</comment>
<keyword id="KW-0378">Hydrolase</keyword>
<keyword id="KW-0460">Magnesium</keyword>
<keyword id="KW-0479">Metal-binding</keyword>
<keyword id="KW-0574">Periplasm</keyword>
<keyword id="KW-0732">Signal</keyword>
<gene>
    <name type="primary">aphA</name>
    <name type="synonym">napA</name>
    <name type="ordered locus">STY4445</name>
    <name type="ordered locus">t4155</name>
</gene>
<sequence>MKKITLALSAVCLLFTLNHSANALVSSPSTLNPGTNVAKLAEQAPVHWVSVAQIENSLTGRPPMAVGFDIDDTVLFSSPGFWRGKKTYSPDSDDYLKNPAFWEKMNNGWDEFSIPKEVARQLIDMHVRRGDSIYFVTGRSQTKTETVSKTLADNFHIPAANMNPVIFAGDKPGQNTKVQWLQEKNMRIFYGDSDNDITAARDCGIRGIRILRAANSTYKPLPQAGAFGEEVIVNSEY</sequence>
<accession>O08430</accession>
<protein>
    <recommendedName>
        <fullName>Class B acid phosphatase</fullName>
        <shortName>CBAP</shortName>
        <ecNumber evidence="5">3.1.3.2</ecNumber>
    </recommendedName>
</protein>